<evidence type="ECO:0000250" key="1">
    <source>
        <dbReference type="UniProtKB" id="P0C8E8"/>
    </source>
</evidence>
<evidence type="ECO:0000255" key="2"/>
<evidence type="ECO:0000255" key="3">
    <source>
        <dbReference type="PROSITE-ProRule" id="PRU00498"/>
    </source>
</evidence>
<evidence type="ECO:0000256" key="4">
    <source>
        <dbReference type="SAM" id="MobiDB-lite"/>
    </source>
</evidence>
<evidence type="ECO:0000269" key="5">
    <source>
    </source>
</evidence>
<evidence type="ECO:0000303" key="6">
    <source>
    </source>
</evidence>
<evidence type="ECO:0000305" key="7"/>
<evidence type="ECO:0000312" key="8">
    <source>
        <dbReference type="EMBL" id="JAA68804.1"/>
    </source>
</evidence>
<proteinExistence type="inferred from homology"/>
<keyword id="KW-1015">Disulfide bond</keyword>
<keyword id="KW-0325">Glycoprotein</keyword>
<keyword id="KW-0964">Secreted</keyword>
<keyword id="KW-0732">Signal</keyword>
<accession>A0A0K8RE99</accession>
<protein>
    <recommendedName>
        <fullName evidence="6">Evasin P1166</fullName>
    </recommendedName>
</protein>
<dbReference type="EMBL" id="GADI01005004">
    <property type="protein sequence ID" value="JAA68804.1"/>
    <property type="molecule type" value="mRNA"/>
</dbReference>
<dbReference type="GO" id="GO:0005576">
    <property type="term" value="C:extracellular region"/>
    <property type="evidence" value="ECO:0007669"/>
    <property type="project" value="UniProtKB-SubCell"/>
</dbReference>
<dbReference type="GO" id="GO:0019958">
    <property type="term" value="F:C-X-C chemokine binding"/>
    <property type="evidence" value="ECO:0000314"/>
    <property type="project" value="UniProtKB"/>
</dbReference>
<name>E1166_IXORI</name>
<reference evidence="8" key="1">
    <citation type="journal article" date="2013" name="FASEB J.">
        <title>De novo Ixodes ricinus salivary gland transcriptome analysis using two next-generation sequencing methodologies.</title>
        <authorList>
            <person name="Schwarz A."/>
            <person name="von Reumont B.M."/>
            <person name="Erhart J."/>
            <person name="Chagas A.C."/>
            <person name="Ribeiro J.M."/>
            <person name="Kotsyfakis M."/>
        </authorList>
    </citation>
    <scope>NUCLEOTIDE SEQUENCE [LARGE SCALE MRNA]</scope>
    <source>
        <tissue evidence="8">Salivary gland</tissue>
    </source>
</reference>
<reference evidence="7" key="2">
    <citation type="journal article" date="2019" name="J. Biol. Chem.">
        <title>A knottin scaffold directs the CXC-chemokine-binding specificity of tick evasins.</title>
        <authorList>
            <person name="Lee A.W."/>
            <person name="Deruaz M."/>
            <person name="Lynch C."/>
            <person name="Davies G."/>
            <person name="Singh K."/>
            <person name="Alenazi Y."/>
            <person name="Eaton J.R.O."/>
            <person name="Kawamura A."/>
            <person name="Shaw J."/>
            <person name="Proudfoot A.E.I."/>
            <person name="Dias J.M."/>
            <person name="Bhattacharya S."/>
        </authorList>
    </citation>
    <scope>FUNCTION</scope>
</reference>
<sequence>MEVKIFTLLQIALFIALGIHLVVAGPETKEDKKSDVYELFTVEYCGTNCTLLTNGRWTACTGKKGTCRCYHESGEKVGLCLSTEYTDFSEYPNPKSSEIDAAAPLPRETH</sequence>
<feature type="signal peptide" evidence="2">
    <location>
        <begin position="1"/>
        <end position="24"/>
    </location>
</feature>
<feature type="chain" id="PRO_5005517127" description="Evasin P1166" evidence="2">
    <location>
        <begin position="25"/>
        <end position="110"/>
    </location>
</feature>
<feature type="region of interest" description="Disordered" evidence="4">
    <location>
        <begin position="89"/>
        <end position="110"/>
    </location>
</feature>
<feature type="glycosylation site" description="N-linked (GlcNAc...) asparagine" evidence="3">
    <location>
        <position position="48"/>
    </location>
</feature>
<feature type="disulfide bond" evidence="1">
    <location>
        <begin position="45"/>
        <end position="67"/>
    </location>
</feature>
<feature type="disulfide bond" evidence="1">
    <location>
        <begin position="49"/>
        <end position="69"/>
    </location>
</feature>
<feature type="disulfide bond" evidence="1">
    <location>
        <begin position="60"/>
        <end position="80"/>
    </location>
</feature>
<organism evidence="8">
    <name type="scientific">Ixodes ricinus</name>
    <name type="common">Common tick</name>
    <name type="synonym">Acarus ricinus</name>
    <dbReference type="NCBI Taxonomy" id="34613"/>
    <lineage>
        <taxon>Eukaryota</taxon>
        <taxon>Metazoa</taxon>
        <taxon>Ecdysozoa</taxon>
        <taxon>Arthropoda</taxon>
        <taxon>Chelicerata</taxon>
        <taxon>Arachnida</taxon>
        <taxon>Acari</taxon>
        <taxon>Parasitiformes</taxon>
        <taxon>Ixodida</taxon>
        <taxon>Ixodoidea</taxon>
        <taxon>Ixodidae</taxon>
        <taxon>Ixodinae</taxon>
        <taxon>Ixodes</taxon>
    </lineage>
</organism>
<comment type="function">
    <text evidence="5">Salivary chemokine-binding protein which binds to host chemokines CXCL1, CXCL2 and CXCL8.</text>
</comment>
<comment type="subcellular location">
    <subcellularLocation>
        <location evidence="7">Secreted</location>
    </subcellularLocation>
</comment>